<gene>
    <name evidence="1" type="primary">thiC</name>
    <name type="ordered locus">CLB_2874</name>
</gene>
<reference key="1">
    <citation type="journal article" date="2007" name="PLoS ONE">
        <title>Analysis of the neurotoxin complex genes in Clostridium botulinum A1-A4 and B1 strains: BoNT/A3, /Ba4 and /B1 clusters are located within plasmids.</title>
        <authorList>
            <person name="Smith T.J."/>
            <person name="Hill K.K."/>
            <person name="Foley B.T."/>
            <person name="Detter J.C."/>
            <person name="Munk A.C."/>
            <person name="Bruce D.C."/>
            <person name="Doggett N.A."/>
            <person name="Smith L.A."/>
            <person name="Marks J.D."/>
            <person name="Xie G."/>
            <person name="Brettin T.S."/>
        </authorList>
    </citation>
    <scope>NUCLEOTIDE SEQUENCE [LARGE SCALE GENOMIC DNA]</scope>
    <source>
        <strain>ATCC 19397 / Type A</strain>
    </source>
</reference>
<organism>
    <name type="scientific">Clostridium botulinum (strain ATCC 19397 / Type A)</name>
    <dbReference type="NCBI Taxonomy" id="441770"/>
    <lineage>
        <taxon>Bacteria</taxon>
        <taxon>Bacillati</taxon>
        <taxon>Bacillota</taxon>
        <taxon>Clostridia</taxon>
        <taxon>Eubacteriales</taxon>
        <taxon>Clostridiaceae</taxon>
        <taxon>Clostridium</taxon>
    </lineage>
</organism>
<dbReference type="EC" id="4.1.99.17" evidence="1"/>
<dbReference type="EMBL" id="CP000726">
    <property type="protein sequence ID" value="ABS35812.1"/>
    <property type="molecule type" value="Genomic_DNA"/>
</dbReference>
<dbReference type="RefSeq" id="WP_012047970.1">
    <property type="nucleotide sequence ID" value="NC_009697.1"/>
</dbReference>
<dbReference type="SMR" id="A7FXG9"/>
<dbReference type="GeneID" id="5186957"/>
<dbReference type="KEGG" id="cba:CLB_2874"/>
<dbReference type="HOGENOM" id="CLU_013181_2_2_9"/>
<dbReference type="UniPathway" id="UPA00060"/>
<dbReference type="GO" id="GO:0005829">
    <property type="term" value="C:cytosol"/>
    <property type="evidence" value="ECO:0007669"/>
    <property type="project" value="TreeGrafter"/>
</dbReference>
<dbReference type="GO" id="GO:0051539">
    <property type="term" value="F:4 iron, 4 sulfur cluster binding"/>
    <property type="evidence" value="ECO:0007669"/>
    <property type="project" value="UniProtKB-KW"/>
</dbReference>
<dbReference type="GO" id="GO:0016830">
    <property type="term" value="F:carbon-carbon lyase activity"/>
    <property type="evidence" value="ECO:0007669"/>
    <property type="project" value="InterPro"/>
</dbReference>
<dbReference type="GO" id="GO:0008270">
    <property type="term" value="F:zinc ion binding"/>
    <property type="evidence" value="ECO:0007669"/>
    <property type="project" value="UniProtKB-UniRule"/>
</dbReference>
<dbReference type="GO" id="GO:0009228">
    <property type="term" value="P:thiamine biosynthetic process"/>
    <property type="evidence" value="ECO:0007669"/>
    <property type="project" value="UniProtKB-KW"/>
</dbReference>
<dbReference type="GO" id="GO:0009229">
    <property type="term" value="P:thiamine diphosphate biosynthetic process"/>
    <property type="evidence" value="ECO:0007669"/>
    <property type="project" value="UniProtKB-UniRule"/>
</dbReference>
<dbReference type="FunFam" id="3.20.20.540:FF:000001">
    <property type="entry name" value="Phosphomethylpyrimidine synthase"/>
    <property type="match status" value="1"/>
</dbReference>
<dbReference type="Gene3D" id="6.10.250.620">
    <property type="match status" value="1"/>
</dbReference>
<dbReference type="Gene3D" id="3.20.20.540">
    <property type="entry name" value="Radical SAM ThiC family, central domain"/>
    <property type="match status" value="1"/>
</dbReference>
<dbReference type="HAMAP" id="MF_00089">
    <property type="entry name" value="ThiC"/>
    <property type="match status" value="1"/>
</dbReference>
<dbReference type="InterPro" id="IPR037509">
    <property type="entry name" value="ThiC"/>
</dbReference>
<dbReference type="InterPro" id="IPR038521">
    <property type="entry name" value="ThiC/Bza_core_dom"/>
</dbReference>
<dbReference type="InterPro" id="IPR002817">
    <property type="entry name" value="ThiC/BzaA/B"/>
</dbReference>
<dbReference type="NCBIfam" id="NF009895">
    <property type="entry name" value="PRK13352.1"/>
    <property type="match status" value="1"/>
</dbReference>
<dbReference type="NCBIfam" id="TIGR00190">
    <property type="entry name" value="thiC"/>
    <property type="match status" value="1"/>
</dbReference>
<dbReference type="PANTHER" id="PTHR30557:SF1">
    <property type="entry name" value="PHOSPHOMETHYLPYRIMIDINE SYNTHASE, CHLOROPLASTIC"/>
    <property type="match status" value="1"/>
</dbReference>
<dbReference type="PANTHER" id="PTHR30557">
    <property type="entry name" value="THIAMINE BIOSYNTHESIS PROTEIN THIC"/>
    <property type="match status" value="1"/>
</dbReference>
<dbReference type="Pfam" id="PF01964">
    <property type="entry name" value="ThiC_Rad_SAM"/>
    <property type="match status" value="1"/>
</dbReference>
<dbReference type="SFLD" id="SFLDF00407">
    <property type="entry name" value="phosphomethylpyrimidine_syntha"/>
    <property type="match status" value="1"/>
</dbReference>
<dbReference type="SFLD" id="SFLDG01114">
    <property type="entry name" value="phosphomethylpyrimidine_syntha"/>
    <property type="match status" value="1"/>
</dbReference>
<dbReference type="SFLD" id="SFLDS00113">
    <property type="entry name" value="Radical_SAM_Phosphomethylpyrim"/>
    <property type="match status" value="1"/>
</dbReference>
<keyword id="KW-0004">4Fe-4S</keyword>
<keyword id="KW-0408">Iron</keyword>
<keyword id="KW-0411">Iron-sulfur</keyword>
<keyword id="KW-0456">Lyase</keyword>
<keyword id="KW-0479">Metal-binding</keyword>
<keyword id="KW-0949">S-adenosyl-L-methionine</keyword>
<keyword id="KW-0784">Thiamine biosynthesis</keyword>
<keyword id="KW-0862">Zinc</keyword>
<accession>A7FXG9</accession>
<proteinExistence type="inferred from homology"/>
<comment type="function">
    <text evidence="1">Catalyzes the synthesis of the hydroxymethylpyrimidine phosphate (HMP-P) moiety of thiamine from aminoimidazole ribotide (AIR) in a radical S-adenosyl-L-methionine (SAM)-dependent reaction.</text>
</comment>
<comment type="catalytic activity">
    <reaction evidence="1">
        <text>5-amino-1-(5-phospho-beta-D-ribosyl)imidazole + S-adenosyl-L-methionine = 4-amino-2-methyl-5-(phosphooxymethyl)pyrimidine + CO + 5'-deoxyadenosine + formate + L-methionine + 3 H(+)</text>
        <dbReference type="Rhea" id="RHEA:24840"/>
        <dbReference type="ChEBI" id="CHEBI:15378"/>
        <dbReference type="ChEBI" id="CHEBI:15740"/>
        <dbReference type="ChEBI" id="CHEBI:17245"/>
        <dbReference type="ChEBI" id="CHEBI:17319"/>
        <dbReference type="ChEBI" id="CHEBI:57844"/>
        <dbReference type="ChEBI" id="CHEBI:58354"/>
        <dbReference type="ChEBI" id="CHEBI:59789"/>
        <dbReference type="ChEBI" id="CHEBI:137981"/>
        <dbReference type="EC" id="4.1.99.17"/>
    </reaction>
</comment>
<comment type="cofactor">
    <cofactor evidence="1">
        <name>[4Fe-4S] cluster</name>
        <dbReference type="ChEBI" id="CHEBI:49883"/>
    </cofactor>
    <text evidence="1">Binds 1 [4Fe-4S] cluster per subunit. The cluster is coordinated with 3 cysteines and an exchangeable S-adenosyl-L-methionine.</text>
</comment>
<comment type="pathway">
    <text evidence="1">Cofactor biosynthesis; thiamine diphosphate biosynthesis.</text>
</comment>
<comment type="similarity">
    <text evidence="1">Belongs to the ThiC family.</text>
</comment>
<protein>
    <recommendedName>
        <fullName evidence="1">Phosphomethylpyrimidine synthase</fullName>
        <ecNumber evidence="1">4.1.99.17</ecNumber>
    </recommendedName>
    <alternativeName>
        <fullName evidence="1">Hydroxymethylpyrimidine phosphate synthase</fullName>
        <shortName evidence="1">HMP-P synthase</shortName>
        <shortName evidence="1">HMP-phosphate synthase</shortName>
        <shortName evidence="1">HMPP synthase</shortName>
    </alternativeName>
    <alternativeName>
        <fullName evidence="1">Thiamine biosynthesis protein ThiC</fullName>
    </alternativeName>
</protein>
<sequence>MNYTTQMDAAKKGIVTKEMEIVAKKENMNVKDLMELVSKGKVAIPANKNHKSLDPEGIGQGLRTKINVNLGISKDCYNIDMELEKVQKAIDMKAEAIMDLSCFGKTEEFRKRLIDMSPAIIGTVPIYDAVGFYDKELKDITSEEFLKVAEKHAENGADFLTIHVGMNRKTAATFKKNPRRMNIVSRGGSLLYAWMELNNKENPFYEGFDKLLDICEKYDVTLSLGDACRPGCIEDSTDASQIEELIALGELTKRAWERNVQVIIEGPGHMTLDEIETNMKIEKKLCHGAPFYVLGPIVTDIAPGYDHITSAIGGAIAATHGADFLCYVTPAEHLRLPNLDDMKEGIIASKIAAHAADLAKGVKGARDWDNAMAKARRDLDWERMFELSIDEEKARRYREESKAKSKDSCTMCGKMCAVRNMNRVTEGKDLNMLRDDD</sequence>
<evidence type="ECO:0000255" key="1">
    <source>
        <dbReference type="HAMAP-Rule" id="MF_00089"/>
    </source>
</evidence>
<feature type="chain" id="PRO_1000057588" description="Phosphomethylpyrimidine synthase">
    <location>
        <begin position="1"/>
        <end position="437"/>
    </location>
</feature>
<feature type="binding site" evidence="1">
    <location>
        <position position="69"/>
    </location>
    <ligand>
        <name>substrate</name>
    </ligand>
</feature>
<feature type="binding site" evidence="1">
    <location>
        <position position="98"/>
    </location>
    <ligand>
        <name>substrate</name>
    </ligand>
</feature>
<feature type="binding site" evidence="1">
    <location>
        <position position="127"/>
    </location>
    <ligand>
        <name>substrate</name>
    </ligand>
</feature>
<feature type="binding site" evidence="1">
    <location>
        <position position="163"/>
    </location>
    <ligand>
        <name>substrate</name>
    </ligand>
</feature>
<feature type="binding site" evidence="1">
    <location>
        <begin position="185"/>
        <end position="187"/>
    </location>
    <ligand>
        <name>substrate</name>
    </ligand>
</feature>
<feature type="binding site" evidence="1">
    <location>
        <begin position="226"/>
        <end position="229"/>
    </location>
    <ligand>
        <name>substrate</name>
    </ligand>
</feature>
<feature type="binding site" evidence="1">
    <location>
        <position position="265"/>
    </location>
    <ligand>
        <name>substrate</name>
    </ligand>
</feature>
<feature type="binding site" evidence="1">
    <location>
        <position position="269"/>
    </location>
    <ligand>
        <name>Zn(2+)</name>
        <dbReference type="ChEBI" id="CHEBI:29105"/>
    </ligand>
</feature>
<feature type="binding site" evidence="1">
    <location>
        <position position="292"/>
    </location>
    <ligand>
        <name>substrate</name>
    </ligand>
</feature>
<feature type="binding site" evidence="1">
    <location>
        <position position="333"/>
    </location>
    <ligand>
        <name>Zn(2+)</name>
        <dbReference type="ChEBI" id="CHEBI:29105"/>
    </ligand>
</feature>
<feature type="binding site" evidence="1">
    <location>
        <position position="409"/>
    </location>
    <ligand>
        <name>[4Fe-4S] cluster</name>
        <dbReference type="ChEBI" id="CHEBI:49883"/>
        <note>4Fe-4S-S-AdoMet</note>
    </ligand>
</feature>
<feature type="binding site" evidence="1">
    <location>
        <position position="412"/>
    </location>
    <ligand>
        <name>[4Fe-4S] cluster</name>
        <dbReference type="ChEBI" id="CHEBI:49883"/>
        <note>4Fe-4S-S-AdoMet</note>
    </ligand>
</feature>
<feature type="binding site" evidence="1">
    <location>
        <position position="416"/>
    </location>
    <ligand>
        <name>[4Fe-4S] cluster</name>
        <dbReference type="ChEBI" id="CHEBI:49883"/>
        <note>4Fe-4S-S-AdoMet</note>
    </ligand>
</feature>
<name>THIC_CLOB1</name>